<keyword id="KW-0030">Aminoacyl-tRNA synthetase</keyword>
<keyword id="KW-0067">ATP-binding</keyword>
<keyword id="KW-0963">Cytoplasm</keyword>
<keyword id="KW-0436">Ligase</keyword>
<keyword id="KW-0547">Nucleotide-binding</keyword>
<keyword id="KW-0648">Protein biosynthesis</keyword>
<keyword id="KW-1185">Reference proteome</keyword>
<comment type="function">
    <text evidence="1">Catalyzes the attachment of isoleucine to tRNA(Ile). As IleRS can inadvertently accommodate and process structurally similar amino acids such as valine, to avoid such errors it has two additional distinct tRNA(Ile)-dependent editing activities. One activity is designated as 'pretransfer' editing and involves the hydrolysis of activated Val-AMP. The other activity is designated 'posttransfer' editing and involves deacylation of mischarged Val-tRNA(Ile).</text>
</comment>
<comment type="catalytic activity">
    <reaction evidence="1">
        <text>tRNA(Ile) + L-isoleucine + ATP = L-isoleucyl-tRNA(Ile) + AMP + diphosphate</text>
        <dbReference type="Rhea" id="RHEA:11060"/>
        <dbReference type="Rhea" id="RHEA-COMP:9666"/>
        <dbReference type="Rhea" id="RHEA-COMP:9695"/>
        <dbReference type="ChEBI" id="CHEBI:30616"/>
        <dbReference type="ChEBI" id="CHEBI:33019"/>
        <dbReference type="ChEBI" id="CHEBI:58045"/>
        <dbReference type="ChEBI" id="CHEBI:78442"/>
        <dbReference type="ChEBI" id="CHEBI:78528"/>
        <dbReference type="ChEBI" id="CHEBI:456215"/>
        <dbReference type="EC" id="6.1.1.5"/>
    </reaction>
</comment>
<comment type="subunit">
    <text evidence="1">Monomer.</text>
</comment>
<comment type="subcellular location">
    <subcellularLocation>
        <location evidence="1">Cytoplasm</location>
    </subcellularLocation>
</comment>
<comment type="domain">
    <text evidence="1">IleRS has two distinct active sites: one for aminoacylation and one for editing. The misactivated valine is translocated from the active site to the editing site, which sterically excludes the correctly activated isoleucine. The single editing site contains two valyl binding pockets, one specific for each substrate (Val-AMP or Val-tRNA(Ile)).</text>
</comment>
<comment type="similarity">
    <text evidence="1">Belongs to the class-I aminoacyl-tRNA synthetase family. IleS type 1 subfamily.</text>
</comment>
<dbReference type="EC" id="6.1.1.5" evidence="1"/>
<dbReference type="EMBL" id="AF222894">
    <property type="protein sequence ID" value="AAF30821.1"/>
    <property type="molecule type" value="Genomic_DNA"/>
</dbReference>
<dbReference type="RefSeq" id="WP_006688542.1">
    <property type="nucleotide sequence ID" value="NC_002162.1"/>
</dbReference>
<dbReference type="SMR" id="Q9PQ79"/>
<dbReference type="STRING" id="273119.UU410"/>
<dbReference type="EnsemblBacteria" id="AAF30821">
    <property type="protein sequence ID" value="AAF30821"/>
    <property type="gene ID" value="UU410"/>
</dbReference>
<dbReference type="GeneID" id="29672433"/>
<dbReference type="KEGG" id="uur:UU410"/>
<dbReference type="eggNOG" id="COG0060">
    <property type="taxonomic scope" value="Bacteria"/>
</dbReference>
<dbReference type="HOGENOM" id="CLU_001493_7_1_14"/>
<dbReference type="OrthoDB" id="9810365at2"/>
<dbReference type="Proteomes" id="UP000000423">
    <property type="component" value="Chromosome"/>
</dbReference>
<dbReference type="GO" id="GO:0005829">
    <property type="term" value="C:cytosol"/>
    <property type="evidence" value="ECO:0007669"/>
    <property type="project" value="TreeGrafter"/>
</dbReference>
<dbReference type="GO" id="GO:0002161">
    <property type="term" value="F:aminoacyl-tRNA deacylase activity"/>
    <property type="evidence" value="ECO:0007669"/>
    <property type="project" value="InterPro"/>
</dbReference>
<dbReference type="GO" id="GO:0005524">
    <property type="term" value="F:ATP binding"/>
    <property type="evidence" value="ECO:0007669"/>
    <property type="project" value="UniProtKB-UniRule"/>
</dbReference>
<dbReference type="GO" id="GO:0004822">
    <property type="term" value="F:isoleucine-tRNA ligase activity"/>
    <property type="evidence" value="ECO:0007669"/>
    <property type="project" value="UniProtKB-UniRule"/>
</dbReference>
<dbReference type="GO" id="GO:0000049">
    <property type="term" value="F:tRNA binding"/>
    <property type="evidence" value="ECO:0007669"/>
    <property type="project" value="InterPro"/>
</dbReference>
<dbReference type="GO" id="GO:0006428">
    <property type="term" value="P:isoleucyl-tRNA aminoacylation"/>
    <property type="evidence" value="ECO:0007669"/>
    <property type="project" value="UniProtKB-UniRule"/>
</dbReference>
<dbReference type="CDD" id="cd07960">
    <property type="entry name" value="Anticodon_Ia_Ile_BEm"/>
    <property type="match status" value="1"/>
</dbReference>
<dbReference type="CDD" id="cd00818">
    <property type="entry name" value="IleRS_core"/>
    <property type="match status" value="1"/>
</dbReference>
<dbReference type="FunFam" id="3.40.50.620:FF:000152">
    <property type="entry name" value="Isoleucine--tRNA ligase"/>
    <property type="match status" value="1"/>
</dbReference>
<dbReference type="Gene3D" id="1.10.730.20">
    <property type="match status" value="1"/>
</dbReference>
<dbReference type="Gene3D" id="3.40.50.620">
    <property type="entry name" value="HUPs"/>
    <property type="match status" value="2"/>
</dbReference>
<dbReference type="Gene3D" id="1.10.10.830">
    <property type="entry name" value="Ile-tRNA synthetase CP2 domain-like"/>
    <property type="match status" value="1"/>
</dbReference>
<dbReference type="HAMAP" id="MF_02002">
    <property type="entry name" value="Ile_tRNA_synth_type1"/>
    <property type="match status" value="1"/>
</dbReference>
<dbReference type="InterPro" id="IPR001412">
    <property type="entry name" value="aa-tRNA-synth_I_CS"/>
</dbReference>
<dbReference type="InterPro" id="IPR002300">
    <property type="entry name" value="aa-tRNA-synth_Ia"/>
</dbReference>
<dbReference type="InterPro" id="IPR033708">
    <property type="entry name" value="Anticodon_Ile_BEm"/>
</dbReference>
<dbReference type="InterPro" id="IPR002301">
    <property type="entry name" value="Ile-tRNA-ligase"/>
</dbReference>
<dbReference type="InterPro" id="IPR023585">
    <property type="entry name" value="Ile-tRNA-ligase_type1"/>
</dbReference>
<dbReference type="InterPro" id="IPR050081">
    <property type="entry name" value="Ile-tRNA_ligase"/>
</dbReference>
<dbReference type="InterPro" id="IPR013155">
    <property type="entry name" value="M/V/L/I-tRNA-synth_anticd-bd"/>
</dbReference>
<dbReference type="InterPro" id="IPR014729">
    <property type="entry name" value="Rossmann-like_a/b/a_fold"/>
</dbReference>
<dbReference type="InterPro" id="IPR009080">
    <property type="entry name" value="tRNAsynth_Ia_anticodon-bd"/>
</dbReference>
<dbReference type="InterPro" id="IPR009008">
    <property type="entry name" value="Val/Leu/Ile-tRNA-synth_edit"/>
</dbReference>
<dbReference type="InterPro" id="IPR010663">
    <property type="entry name" value="Znf_FPG/IleRS"/>
</dbReference>
<dbReference type="NCBIfam" id="TIGR00392">
    <property type="entry name" value="ileS"/>
    <property type="match status" value="1"/>
</dbReference>
<dbReference type="PANTHER" id="PTHR42765:SF1">
    <property type="entry name" value="ISOLEUCINE--TRNA LIGASE, MITOCHONDRIAL"/>
    <property type="match status" value="1"/>
</dbReference>
<dbReference type="PANTHER" id="PTHR42765">
    <property type="entry name" value="SOLEUCYL-TRNA SYNTHETASE"/>
    <property type="match status" value="1"/>
</dbReference>
<dbReference type="Pfam" id="PF08264">
    <property type="entry name" value="Anticodon_1"/>
    <property type="match status" value="1"/>
</dbReference>
<dbReference type="Pfam" id="PF00133">
    <property type="entry name" value="tRNA-synt_1"/>
    <property type="match status" value="1"/>
</dbReference>
<dbReference type="Pfam" id="PF06827">
    <property type="entry name" value="zf-FPG_IleRS"/>
    <property type="match status" value="1"/>
</dbReference>
<dbReference type="PRINTS" id="PR00984">
    <property type="entry name" value="TRNASYNTHILE"/>
</dbReference>
<dbReference type="SUPFAM" id="SSF47323">
    <property type="entry name" value="Anticodon-binding domain of a subclass of class I aminoacyl-tRNA synthetases"/>
    <property type="match status" value="1"/>
</dbReference>
<dbReference type="SUPFAM" id="SSF52374">
    <property type="entry name" value="Nucleotidylyl transferase"/>
    <property type="match status" value="1"/>
</dbReference>
<dbReference type="SUPFAM" id="SSF50677">
    <property type="entry name" value="ValRS/IleRS/LeuRS editing domain"/>
    <property type="match status" value="1"/>
</dbReference>
<dbReference type="PROSITE" id="PS00178">
    <property type="entry name" value="AA_TRNA_LIGASE_I"/>
    <property type="match status" value="1"/>
</dbReference>
<accession>Q9PQ79</accession>
<name>SYI_UREPA</name>
<organism>
    <name type="scientific">Ureaplasma parvum serovar 3 (strain ATCC 700970)</name>
    <dbReference type="NCBI Taxonomy" id="273119"/>
    <lineage>
        <taxon>Bacteria</taxon>
        <taxon>Bacillati</taxon>
        <taxon>Mycoplasmatota</taxon>
        <taxon>Mycoplasmoidales</taxon>
        <taxon>Mycoplasmoidaceae</taxon>
        <taxon>Ureaplasma</taxon>
    </lineage>
</organism>
<evidence type="ECO:0000255" key="1">
    <source>
        <dbReference type="HAMAP-Rule" id="MF_02002"/>
    </source>
</evidence>
<gene>
    <name evidence="1" type="primary">ileS</name>
    <name type="ordered locus">UU410</name>
</gene>
<proteinExistence type="inferred from homology"/>
<sequence>MKDYKSTLNMPTTGFEMRANLNVKEPKIQQFWVEHQIYEKLLTKNKDKKPFILHDGPPYANGNIHIGHALNKILKDFVVSYHNMNNYYSPYIPGWDTHGLPIEVALSKKIKLSNLSVNERREQCKKYALEQVNNQIQQFLRLGMISDFKQRYLTLDHNYEIDQLKLFTYMLKKGFIYQDFKPVFWSWSSQTALAESEIEYADRQSSAIYVKMKVVDHNDLFTDKPTSLVIWTTTPWTLPANLAIAIHPELVYSLIEYKNENYIIAKPLVETFVKKVGFEDYKWIKDFKANTLEKIKYISPISKKHAFVIMDEYVSANDGTGLVHNAPAFGLEDYYACKKYGIETVVMIDQFGKYNALVNDLELENMFYEDANQVILNRLMNEHLLIHHEVITHSVAHDWRTKKPVMYRATKQWFVSIEKILPNILQTLNNDVKSTSFRGIERMHEMIVNRKEWCISRQRVWGVPIPMIFDENHNAIMDHELVENIINVLNEKGVNAWFDLDVNAFLTPKYLSMKNKTFYKEKDIMDVWFDSGSSYNILGHYNLNYPADVYLEGYDQYRGWFNSSLITGTILNNRAPYKYLVAHGMVLDGEGYKMSKSKGNVVDPLDVCKIYGADVLRLWIANSDYQNDTRISEEILKQNAEIYRRIRNTLFKYSLSILNDFEPSVDFSFNVRQEEQFVLNEFNELHIKVIKAYENFDYQTVVKLFNKFILDLSSWYFENIKDDMYCLAINDPIRKQIQSAVYWILKNSLIDLTPIIPHTTEEAYSFLKDANKKESIRLEDFYDQSQFQFKKGIAHVKAFFSIKDQIFNELENARKNNILKKNNEAFVTIAKNLILDDYLINNPKLLAKWFGVAKIEFANNTNVANANFKKCLRCWNHFPDEEMYNDELSMNCYKVINKIK</sequence>
<reference key="1">
    <citation type="journal article" date="2000" name="Nature">
        <title>The complete sequence of the mucosal pathogen Ureaplasma urealyticum.</title>
        <authorList>
            <person name="Glass J.I."/>
            <person name="Lefkowitz E.J."/>
            <person name="Glass J.S."/>
            <person name="Heiner C.R."/>
            <person name="Chen E.Y."/>
            <person name="Cassell G.H."/>
        </authorList>
    </citation>
    <scope>NUCLEOTIDE SEQUENCE [LARGE SCALE GENOMIC DNA]</scope>
    <source>
        <strain>ATCC 700970</strain>
    </source>
</reference>
<protein>
    <recommendedName>
        <fullName evidence="1">Isoleucine--tRNA ligase</fullName>
        <ecNumber evidence="1">6.1.1.5</ecNumber>
    </recommendedName>
    <alternativeName>
        <fullName evidence="1">Isoleucyl-tRNA synthetase</fullName>
        <shortName evidence="1">IleRS</shortName>
    </alternativeName>
</protein>
<feature type="chain" id="PRO_0000098496" description="Isoleucine--tRNA ligase">
    <location>
        <begin position="1"/>
        <end position="900"/>
    </location>
</feature>
<feature type="short sequence motif" description="'HIGH' region">
    <location>
        <begin position="58"/>
        <end position="68"/>
    </location>
</feature>
<feature type="short sequence motif" description="'KMSKS' region">
    <location>
        <begin position="593"/>
        <end position="597"/>
    </location>
</feature>
<feature type="binding site" evidence="1">
    <location>
        <position position="552"/>
    </location>
    <ligand>
        <name>L-isoleucyl-5'-AMP</name>
        <dbReference type="ChEBI" id="CHEBI:178002"/>
    </ligand>
</feature>
<feature type="binding site" evidence="1">
    <location>
        <position position="596"/>
    </location>
    <ligand>
        <name>ATP</name>
        <dbReference type="ChEBI" id="CHEBI:30616"/>
    </ligand>
</feature>